<comment type="subcellular location">
    <subcellularLocation>
        <location evidence="1">Membrane</location>
        <topology evidence="1">Multi-pass membrane protein</topology>
    </subcellularLocation>
</comment>
<comment type="similarity">
    <text evidence="3">Belongs to the major facilitator superfamily. TCR/Tet family.</text>
</comment>
<gene>
    <name type="ORF">SPBC16A3.17c</name>
</gene>
<reference evidence="4" key="1">
    <citation type="journal article" date="2002" name="Nature">
        <title>The genome sequence of Schizosaccharomyces pombe.</title>
        <authorList>
            <person name="Wood V."/>
            <person name="Gwilliam R."/>
            <person name="Rajandream M.A."/>
            <person name="Lyne M.H."/>
            <person name="Lyne R."/>
            <person name="Stewart A."/>
            <person name="Sgouros J.G."/>
            <person name="Peat N."/>
            <person name="Hayles J."/>
            <person name="Baker S.G."/>
            <person name="Basham D."/>
            <person name="Bowman S."/>
            <person name="Brooks K."/>
            <person name="Brown D."/>
            <person name="Brown S."/>
            <person name="Chillingworth T."/>
            <person name="Churcher C.M."/>
            <person name="Collins M."/>
            <person name="Connor R."/>
            <person name="Cronin A."/>
            <person name="Davis P."/>
            <person name="Feltwell T."/>
            <person name="Fraser A."/>
            <person name="Gentles S."/>
            <person name="Goble A."/>
            <person name="Hamlin N."/>
            <person name="Harris D.E."/>
            <person name="Hidalgo J."/>
            <person name="Hodgson G."/>
            <person name="Holroyd S."/>
            <person name="Hornsby T."/>
            <person name="Howarth S."/>
            <person name="Huckle E.J."/>
            <person name="Hunt S."/>
            <person name="Jagels K."/>
            <person name="James K.D."/>
            <person name="Jones L."/>
            <person name="Jones M."/>
            <person name="Leather S."/>
            <person name="McDonald S."/>
            <person name="McLean J."/>
            <person name="Mooney P."/>
            <person name="Moule S."/>
            <person name="Mungall K.L."/>
            <person name="Murphy L.D."/>
            <person name="Niblett D."/>
            <person name="Odell C."/>
            <person name="Oliver K."/>
            <person name="O'Neil S."/>
            <person name="Pearson D."/>
            <person name="Quail M.A."/>
            <person name="Rabbinowitsch E."/>
            <person name="Rutherford K.M."/>
            <person name="Rutter S."/>
            <person name="Saunders D."/>
            <person name="Seeger K."/>
            <person name="Sharp S."/>
            <person name="Skelton J."/>
            <person name="Simmonds M.N."/>
            <person name="Squares R."/>
            <person name="Squares S."/>
            <person name="Stevens K."/>
            <person name="Taylor K."/>
            <person name="Taylor R.G."/>
            <person name="Tivey A."/>
            <person name="Walsh S.V."/>
            <person name="Warren T."/>
            <person name="Whitehead S."/>
            <person name="Woodward J.R."/>
            <person name="Volckaert G."/>
            <person name="Aert R."/>
            <person name="Robben J."/>
            <person name="Grymonprez B."/>
            <person name="Weltjens I."/>
            <person name="Vanstreels E."/>
            <person name="Rieger M."/>
            <person name="Schaefer M."/>
            <person name="Mueller-Auer S."/>
            <person name="Gabel C."/>
            <person name="Fuchs M."/>
            <person name="Duesterhoeft A."/>
            <person name="Fritzc C."/>
            <person name="Holzer E."/>
            <person name="Moestl D."/>
            <person name="Hilbert H."/>
            <person name="Borzym K."/>
            <person name="Langer I."/>
            <person name="Beck A."/>
            <person name="Lehrach H."/>
            <person name="Reinhardt R."/>
            <person name="Pohl T.M."/>
            <person name="Eger P."/>
            <person name="Zimmermann W."/>
            <person name="Wedler H."/>
            <person name="Wambutt R."/>
            <person name="Purnelle B."/>
            <person name="Goffeau A."/>
            <person name="Cadieu E."/>
            <person name="Dreano S."/>
            <person name="Gloux S."/>
            <person name="Lelaure V."/>
            <person name="Mottier S."/>
            <person name="Galibert F."/>
            <person name="Aves S.J."/>
            <person name="Xiang Z."/>
            <person name="Hunt C."/>
            <person name="Moore K."/>
            <person name="Hurst S.M."/>
            <person name="Lucas M."/>
            <person name="Rochet M."/>
            <person name="Gaillardin C."/>
            <person name="Tallada V.A."/>
            <person name="Garzon A."/>
            <person name="Thode G."/>
            <person name="Daga R.R."/>
            <person name="Cruzado L."/>
            <person name="Jimenez J."/>
            <person name="Sanchez M."/>
            <person name="del Rey F."/>
            <person name="Benito J."/>
            <person name="Dominguez A."/>
            <person name="Revuelta J.L."/>
            <person name="Moreno S."/>
            <person name="Armstrong J."/>
            <person name="Forsburg S.L."/>
            <person name="Cerutti L."/>
            <person name="Lowe T."/>
            <person name="McCombie W.R."/>
            <person name="Paulsen I."/>
            <person name="Potashkin J."/>
            <person name="Shpakovski G.V."/>
            <person name="Ussery D."/>
            <person name="Barrell B.G."/>
            <person name="Nurse P."/>
        </authorList>
    </citation>
    <scope>NUCLEOTIDE SEQUENCE [LARGE SCALE GENOMIC DNA]</scope>
    <source>
        <strain>972 / ATCC 24843</strain>
    </source>
</reference>
<sequence length="599" mass="65297">MSSSSSHNSFSGSKTNAAEGQNSIDGLSLKKTTSPFILTAYPSNEEKEVKETDIVPDENKVNELDVHKQSTEFSKQESASNDDDTNIQLIPENNMKIVVPALILTLFLAALDNTIVTTALPTIAEDFNDTSSSSWIGSAYVLASNAVLPAVGVFCNILGRKIVLYICIFFFMLGSALCGASQNMIWLIVCRAIQGLGGGGIISLVNIIISDITPLRTRPMYSGILATAWGAALVAGPIIGGAICQRTTWRWIFFINLPSGGIATALIVVFLHLLPCERTSFKKFLKTFDFIGLVCVITGIVLILLGISLGASSGKWRRANILCYLIIGGCLFVFAFIYDTFTKRNAVLPPPFFKNRSSAALLACSSFFYLNYMLFAYYVPQYFQRIRGDNPIMSGVHTIPCAAVLCFFCTTVGMVLRKLGRYLPLIYVGYISCVAGMGAMICVNATTSMSKVMGLTTIFMFGSGFLFLPPLIAMQATFPPAMTSMATATLMFIRTMGGSIGITVGEVIFNERVTQSFDGNTTYAQLSYKQVERLPQELQIRVKNTYASAFRVIWIFCTVVMAIGFASIFFIKSRPLISNAQSVPAKKKGDSDEKPAEKV</sequence>
<feature type="chain" id="PRO_0000343518" description="Uncharacterized MFS-type transporter C16A3.17c">
    <location>
        <begin position="1"/>
        <end position="599"/>
    </location>
</feature>
<feature type="transmembrane region" description="Helical" evidence="1">
    <location>
        <begin position="97"/>
        <end position="117"/>
    </location>
</feature>
<feature type="transmembrane region" description="Helical" evidence="1">
    <location>
        <begin position="135"/>
        <end position="155"/>
    </location>
</feature>
<feature type="transmembrane region" description="Helical" evidence="1">
    <location>
        <begin position="162"/>
        <end position="182"/>
    </location>
</feature>
<feature type="transmembrane region" description="Helical" evidence="1">
    <location>
        <begin position="192"/>
        <end position="212"/>
    </location>
</feature>
<feature type="transmembrane region" description="Helical" evidence="1">
    <location>
        <begin position="223"/>
        <end position="243"/>
    </location>
</feature>
<feature type="transmembrane region" description="Helical" evidence="1">
    <location>
        <begin position="251"/>
        <end position="271"/>
    </location>
</feature>
<feature type="transmembrane region" description="Helical" evidence="1">
    <location>
        <begin position="290"/>
        <end position="310"/>
    </location>
</feature>
<feature type="transmembrane region" description="Helical" evidence="1">
    <location>
        <begin position="321"/>
        <end position="341"/>
    </location>
</feature>
<feature type="transmembrane region" description="Helical" evidence="1">
    <location>
        <begin position="359"/>
        <end position="379"/>
    </location>
</feature>
<feature type="transmembrane region" description="Helical" evidence="1">
    <location>
        <begin position="396"/>
        <end position="416"/>
    </location>
</feature>
<feature type="transmembrane region" description="Helical" evidence="1">
    <location>
        <begin position="423"/>
        <end position="443"/>
    </location>
</feature>
<feature type="transmembrane region" description="Helical" evidence="1">
    <location>
        <begin position="452"/>
        <end position="472"/>
    </location>
</feature>
<feature type="transmembrane region" description="Helical" evidence="1">
    <location>
        <begin position="489"/>
        <end position="509"/>
    </location>
</feature>
<feature type="transmembrane region" description="Helical" evidence="1">
    <location>
        <begin position="552"/>
        <end position="572"/>
    </location>
</feature>
<feature type="region of interest" description="Disordered" evidence="2">
    <location>
        <begin position="1"/>
        <end position="27"/>
    </location>
</feature>
<feature type="region of interest" description="Disordered" evidence="2">
    <location>
        <begin position="41"/>
        <end position="86"/>
    </location>
</feature>
<feature type="compositionally biased region" description="Low complexity" evidence="2">
    <location>
        <begin position="1"/>
        <end position="13"/>
    </location>
</feature>
<feature type="compositionally biased region" description="Polar residues" evidence="2">
    <location>
        <begin position="14"/>
        <end position="27"/>
    </location>
</feature>
<feature type="compositionally biased region" description="Basic and acidic residues" evidence="2">
    <location>
        <begin position="44"/>
        <end position="70"/>
    </location>
</feature>
<keyword id="KW-0472">Membrane</keyword>
<keyword id="KW-1185">Reference proteome</keyword>
<keyword id="KW-0812">Transmembrane</keyword>
<keyword id="KW-1133">Transmembrane helix</keyword>
<keyword id="KW-0813">Transport</keyword>
<proteinExistence type="inferred from homology"/>
<organism>
    <name type="scientific">Schizosaccharomyces pombe (strain 972 / ATCC 24843)</name>
    <name type="common">Fission yeast</name>
    <dbReference type="NCBI Taxonomy" id="284812"/>
    <lineage>
        <taxon>Eukaryota</taxon>
        <taxon>Fungi</taxon>
        <taxon>Dikarya</taxon>
        <taxon>Ascomycota</taxon>
        <taxon>Taphrinomycotina</taxon>
        <taxon>Schizosaccharomycetes</taxon>
        <taxon>Schizosaccharomycetales</taxon>
        <taxon>Schizosaccharomycetaceae</taxon>
        <taxon>Schizosaccharomyces</taxon>
    </lineage>
</organism>
<dbReference type="EMBL" id="CU329671">
    <property type="protein sequence ID" value="CAA16868.1"/>
    <property type="molecule type" value="Genomic_DNA"/>
</dbReference>
<dbReference type="PIR" id="T39535">
    <property type="entry name" value="T39535"/>
</dbReference>
<dbReference type="RefSeq" id="NP_596772.1">
    <property type="nucleotide sequence ID" value="NM_001023793.2"/>
</dbReference>
<dbReference type="SMR" id="O42922"/>
<dbReference type="BioGRID" id="276523">
    <property type="interactions" value="4"/>
</dbReference>
<dbReference type="FunCoup" id="O42922">
    <property type="interactions" value="33"/>
</dbReference>
<dbReference type="STRING" id="284812.O42922"/>
<dbReference type="iPTMnet" id="O42922"/>
<dbReference type="PaxDb" id="4896-SPBC16A3.17c.1"/>
<dbReference type="EnsemblFungi" id="SPBC16A3.17c.1">
    <property type="protein sequence ID" value="SPBC16A3.17c.1:pep"/>
    <property type="gene ID" value="SPBC16A3.17c"/>
</dbReference>
<dbReference type="KEGG" id="spo:2539979"/>
<dbReference type="PomBase" id="SPBC16A3.17c"/>
<dbReference type="VEuPathDB" id="FungiDB:SPBC16A3.17c"/>
<dbReference type="eggNOG" id="KOG0254">
    <property type="taxonomic scope" value="Eukaryota"/>
</dbReference>
<dbReference type="HOGENOM" id="CLU_000960_22_0_1"/>
<dbReference type="InParanoid" id="O42922"/>
<dbReference type="OMA" id="GFVRMIS"/>
<dbReference type="PhylomeDB" id="O42922"/>
<dbReference type="PRO" id="PR:O42922"/>
<dbReference type="Proteomes" id="UP000002485">
    <property type="component" value="Chromosome II"/>
</dbReference>
<dbReference type="GO" id="GO:0005886">
    <property type="term" value="C:plasma membrane"/>
    <property type="evidence" value="ECO:0000318"/>
    <property type="project" value="GO_Central"/>
</dbReference>
<dbReference type="GO" id="GO:0022857">
    <property type="term" value="F:transmembrane transporter activity"/>
    <property type="evidence" value="ECO:0000318"/>
    <property type="project" value="GO_Central"/>
</dbReference>
<dbReference type="GO" id="GO:1990822">
    <property type="term" value="P:basic amino acid transmembrane transport"/>
    <property type="evidence" value="ECO:0000266"/>
    <property type="project" value="PomBase"/>
</dbReference>
<dbReference type="GO" id="GO:0055085">
    <property type="term" value="P:transmembrane transport"/>
    <property type="evidence" value="ECO:0000318"/>
    <property type="project" value="GO_Central"/>
</dbReference>
<dbReference type="CDD" id="cd17502">
    <property type="entry name" value="MFS_Azr1_MDR_like"/>
    <property type="match status" value="1"/>
</dbReference>
<dbReference type="FunFam" id="1.20.1250.20:FF:000373">
    <property type="entry name" value="Vacuolar basic amino acid transporter"/>
    <property type="match status" value="1"/>
</dbReference>
<dbReference type="Gene3D" id="1.20.1250.20">
    <property type="entry name" value="MFS general substrate transporter like domains"/>
    <property type="match status" value="2"/>
</dbReference>
<dbReference type="InterPro" id="IPR011701">
    <property type="entry name" value="MFS"/>
</dbReference>
<dbReference type="InterPro" id="IPR020846">
    <property type="entry name" value="MFS_dom"/>
</dbReference>
<dbReference type="InterPro" id="IPR036259">
    <property type="entry name" value="MFS_trans_sf"/>
</dbReference>
<dbReference type="PANTHER" id="PTHR23501:SF102">
    <property type="entry name" value="DRUG TRANSPORTER, PUTATIVE (AFU_ORTHOLOGUE AFUA_3G08530)-RELATED"/>
    <property type="match status" value="1"/>
</dbReference>
<dbReference type="PANTHER" id="PTHR23501">
    <property type="entry name" value="MAJOR FACILITATOR SUPERFAMILY"/>
    <property type="match status" value="1"/>
</dbReference>
<dbReference type="Pfam" id="PF07690">
    <property type="entry name" value="MFS_1"/>
    <property type="match status" value="1"/>
</dbReference>
<dbReference type="PRINTS" id="PR01036">
    <property type="entry name" value="TCRTETB"/>
</dbReference>
<dbReference type="SUPFAM" id="SSF103473">
    <property type="entry name" value="MFS general substrate transporter"/>
    <property type="match status" value="1"/>
</dbReference>
<dbReference type="PROSITE" id="PS50850">
    <property type="entry name" value="MFS"/>
    <property type="match status" value="1"/>
</dbReference>
<evidence type="ECO:0000255" key="1"/>
<evidence type="ECO:0000256" key="2">
    <source>
        <dbReference type="SAM" id="MobiDB-lite"/>
    </source>
</evidence>
<evidence type="ECO:0000305" key="3"/>
<evidence type="ECO:0000312" key="4">
    <source>
        <dbReference type="EMBL" id="CAA16868.1"/>
    </source>
</evidence>
<protein>
    <recommendedName>
        <fullName>Uncharacterized MFS-type transporter C16A3.17c</fullName>
    </recommendedName>
</protein>
<accession>O42922</accession>
<name>YBIH_SCHPO</name>